<organism>
    <name type="scientific">Escherichia coli (strain K12)</name>
    <dbReference type="NCBI Taxonomy" id="83333"/>
    <lineage>
        <taxon>Bacteria</taxon>
        <taxon>Pseudomonadati</taxon>
        <taxon>Pseudomonadota</taxon>
        <taxon>Gammaproteobacteria</taxon>
        <taxon>Enterobacterales</taxon>
        <taxon>Enterobacteriaceae</taxon>
        <taxon>Escherichia</taxon>
    </lineage>
</organism>
<name>YQIK_ECOLI</name>
<feature type="chain" id="PRO_0000169419" description="Flotillin family inner membrane protein YqiK">
    <location>
        <begin position="1"/>
        <end position="553"/>
    </location>
</feature>
<feature type="topological domain" description="Periplasmic" evidence="2">
    <location>
        <begin position="1"/>
        <end position="9"/>
    </location>
</feature>
<feature type="transmembrane region" description="Helical" evidence="2">
    <location>
        <begin position="10"/>
        <end position="30"/>
    </location>
</feature>
<feature type="topological domain" description="Cytoplasmic" evidence="3">
    <location>
        <begin position="31"/>
        <end position="553"/>
    </location>
</feature>
<evidence type="ECO:0000250" key="1">
    <source>
        <dbReference type="UniProtKB" id="O32076"/>
    </source>
</evidence>
<evidence type="ECO:0000255" key="2"/>
<evidence type="ECO:0000269" key="3">
    <source>
    </source>
</evidence>
<evidence type="ECO:0000269" key="4">
    <source>
    </source>
</evidence>
<evidence type="ECO:0000269" key="5">
    <source>
    </source>
</evidence>
<evidence type="ECO:0000305" key="6"/>
<protein>
    <recommendedName>
        <fullName>Flotillin family inner membrane protein YqiK</fullName>
    </recommendedName>
</protein>
<dbReference type="EMBL" id="U00096">
    <property type="protein sequence ID" value="AAC76087.1"/>
    <property type="molecule type" value="Genomic_DNA"/>
</dbReference>
<dbReference type="EMBL" id="AP009048">
    <property type="protein sequence ID" value="BAA16578.1"/>
    <property type="molecule type" value="Genomic_DNA"/>
</dbReference>
<dbReference type="EMBL" id="AY605712">
    <property type="protein sequence ID" value="AAT28328.1"/>
    <property type="molecule type" value="Genomic_DNA"/>
</dbReference>
<dbReference type="PIR" id="A65093">
    <property type="entry name" value="A65093"/>
</dbReference>
<dbReference type="RefSeq" id="NP_417523.1">
    <property type="nucleotide sequence ID" value="NC_000913.3"/>
</dbReference>
<dbReference type="RefSeq" id="WP_001311137.1">
    <property type="nucleotide sequence ID" value="NZ_SSZK01000028.1"/>
</dbReference>
<dbReference type="SMR" id="P77306"/>
<dbReference type="BioGRID" id="4259252">
    <property type="interactions" value="19"/>
</dbReference>
<dbReference type="FunCoup" id="P77306">
    <property type="interactions" value="172"/>
</dbReference>
<dbReference type="IntAct" id="P77306">
    <property type="interactions" value="4"/>
</dbReference>
<dbReference type="STRING" id="511145.b3051"/>
<dbReference type="PaxDb" id="511145-b3051"/>
<dbReference type="EnsemblBacteria" id="AAC76087">
    <property type="protein sequence ID" value="AAC76087"/>
    <property type="gene ID" value="b3051"/>
</dbReference>
<dbReference type="GeneID" id="947537"/>
<dbReference type="KEGG" id="ecj:JW3023"/>
<dbReference type="KEGG" id="eco:b3051"/>
<dbReference type="KEGG" id="ecoc:C3026_16660"/>
<dbReference type="PATRIC" id="fig|1411691.4.peg.3680"/>
<dbReference type="EchoBASE" id="EB3983"/>
<dbReference type="eggNOG" id="COG2268">
    <property type="taxonomic scope" value="Bacteria"/>
</dbReference>
<dbReference type="HOGENOM" id="CLU_013048_1_0_6"/>
<dbReference type="InParanoid" id="P77306"/>
<dbReference type="OMA" id="AFQIQDI"/>
<dbReference type="OrthoDB" id="9815577at2"/>
<dbReference type="PhylomeDB" id="P77306"/>
<dbReference type="BioCyc" id="EcoCyc:G7589-MONOMER"/>
<dbReference type="PRO" id="PR:P77306"/>
<dbReference type="Proteomes" id="UP000000625">
    <property type="component" value="Chromosome"/>
</dbReference>
<dbReference type="GO" id="GO:0005829">
    <property type="term" value="C:cytosol"/>
    <property type="evidence" value="ECO:0000314"/>
    <property type="project" value="EcoCyc"/>
</dbReference>
<dbReference type="GO" id="GO:0045121">
    <property type="term" value="C:membrane raft"/>
    <property type="evidence" value="ECO:0007669"/>
    <property type="project" value="UniProtKB-SubCell"/>
</dbReference>
<dbReference type="GO" id="GO:0005886">
    <property type="term" value="C:plasma membrane"/>
    <property type="evidence" value="ECO:0000314"/>
    <property type="project" value="EcoCyc"/>
</dbReference>
<dbReference type="CDD" id="cd03399">
    <property type="entry name" value="SPFH_flotillin"/>
    <property type="match status" value="1"/>
</dbReference>
<dbReference type="FunFam" id="3.30.479.30:FF:000014">
    <property type="entry name" value="Inner membrane protein YqiK"/>
    <property type="match status" value="1"/>
</dbReference>
<dbReference type="Gene3D" id="3.30.479.30">
    <property type="entry name" value="Band 7 domain"/>
    <property type="match status" value="1"/>
</dbReference>
<dbReference type="InterPro" id="IPR001107">
    <property type="entry name" value="Band_7"/>
</dbReference>
<dbReference type="InterPro" id="IPR036013">
    <property type="entry name" value="Band_7/SPFH_dom_sf"/>
</dbReference>
<dbReference type="InterPro" id="IPR031905">
    <property type="entry name" value="Flotillin_C"/>
</dbReference>
<dbReference type="InterPro" id="IPR027705">
    <property type="entry name" value="Flotillin_fam"/>
</dbReference>
<dbReference type="PANTHER" id="PTHR13806:SF31">
    <property type="entry name" value="FLOTILLIN-LIKE PROTEIN 1-RELATED"/>
    <property type="match status" value="1"/>
</dbReference>
<dbReference type="PANTHER" id="PTHR13806">
    <property type="entry name" value="FLOTILLIN-RELATED"/>
    <property type="match status" value="1"/>
</dbReference>
<dbReference type="Pfam" id="PF01145">
    <property type="entry name" value="Band_7"/>
    <property type="match status" value="1"/>
</dbReference>
<dbReference type="Pfam" id="PF15975">
    <property type="entry name" value="Flot"/>
    <property type="match status" value="1"/>
</dbReference>
<dbReference type="SMART" id="SM00244">
    <property type="entry name" value="PHB"/>
    <property type="match status" value="1"/>
</dbReference>
<dbReference type="SUPFAM" id="SSF117892">
    <property type="entry name" value="Band 7/SPFH domain"/>
    <property type="match status" value="1"/>
</dbReference>
<proteinExistence type="evidence at protein level"/>
<comment type="function">
    <text evidence="1 4">Found in membrane microdomains that may be equivalent to eukaryotic membrane rafts (PubMed:20713508). FMMs are highly dynamic and increase in number as cells age. Flotillins are thought to be important factors in membrane fluidity (By similarity).</text>
</comment>
<comment type="subunit">
    <text evidence="1">Homooligomerizes.</text>
</comment>
<comment type="subcellular location">
    <subcellularLocation>
        <location evidence="3 4">Cell inner membrane</location>
        <topology evidence="2">Single-pass membrane protein</topology>
    </subcellularLocation>
    <subcellularLocation>
        <location evidence="4">Membrane raft</location>
        <topology evidence="2">Single-pass membrane protein</topology>
    </subcellularLocation>
    <text evidence="4">Present in detergent-resistant membrane (DRM) fractions, approximately 6 foci per cell.</text>
</comment>
<comment type="disruption phenotype">
    <text evidence="5">No visible effect on resistance to oxidizing agents, proton motive force-damaging agents, membrane or cell wall stress. Improved resistance to ampicillin, enhanced swimming ability.</text>
</comment>
<comment type="similarity">
    <text evidence="6">Belongs to the band 7/mec-2 family. Flotillin subfamily.</text>
</comment>
<gene>
    <name type="primary">yqiK</name>
    <name type="ordered locus">b3051</name>
    <name type="ordered locus">JW3023</name>
</gene>
<sequence length="553" mass="60700">MDDIVNSVPSWMFTAIIAVCILFIIGIIFARLYRRASAEQAFVRTGLGGQKVVMSGGAIVMPIFHEIIPINMNTLKLEVSRSTIDSLITKDRMRVDVVVAFFVRVKPSVEGIATAAQTLGQRTLSPEDLRMLVEDKFVDALRATAAQMTMHELQDTRENFVQGVQNTVAEDLSKNGLELESVSLTNFNQTSKEHFNPNNAFDAEGLTKLTQETERRRRERNEVEQDVEVAVREKNRDALSRKLEIEQQEAFMTLEQEQQVKTRTAEQNARIAAFEAERRREAEQTRILAERQIQETEIDREQAVRSRKVEAEREVRIKEIEQQQVTEIANQTKSIAIAAKSEQQSQAEARANLALAEAVSAQQNVETTRQTAEADRAKQVALIAAAQDAETKAVELTVRAKAEKEAAEMQAAAIVELAEATRKKGLAEAEAQRALNDAINVLSDEQTSLKFKLALLQALPAVIEKSVEPMKSIDGIKIIQVDGLNRGGAAGDANTGNVGGGNLAEQALSAALSYRTQAPLIDSLLNEIGVSGGSLAALTSPLTSTTPVEEKAE</sequence>
<accession>P77306</accession>
<accession>Q6J1J6</accession>
<keyword id="KW-0997">Cell inner membrane</keyword>
<keyword id="KW-1003">Cell membrane</keyword>
<keyword id="KW-0472">Membrane</keyword>
<keyword id="KW-1185">Reference proteome</keyword>
<keyword id="KW-0812">Transmembrane</keyword>
<keyword id="KW-1133">Transmembrane helix</keyword>
<reference key="1">
    <citation type="journal article" date="1997" name="DNA Res.">
        <title>Construction of a contiguous 874-kb sequence of the Escherichia coli-K12 genome corresponding to 50.0-68.8 min on the linkage map and analysis of its sequence features.</title>
        <authorList>
            <person name="Yamamoto Y."/>
            <person name="Aiba H."/>
            <person name="Baba T."/>
            <person name="Hayashi K."/>
            <person name="Inada T."/>
            <person name="Isono K."/>
            <person name="Itoh T."/>
            <person name="Kimura S."/>
            <person name="Kitagawa M."/>
            <person name="Makino K."/>
            <person name="Miki T."/>
            <person name="Mitsuhashi N."/>
            <person name="Mizobuchi K."/>
            <person name="Mori H."/>
            <person name="Nakade S."/>
            <person name="Nakamura Y."/>
            <person name="Nashimoto H."/>
            <person name="Oshima T."/>
            <person name="Oyama S."/>
            <person name="Saito N."/>
            <person name="Sampei G."/>
            <person name="Satoh Y."/>
            <person name="Sivasundaram S."/>
            <person name="Tagami H."/>
            <person name="Takahashi H."/>
            <person name="Takeda J."/>
            <person name="Takemoto K."/>
            <person name="Uehara K."/>
            <person name="Wada C."/>
            <person name="Yamagata S."/>
            <person name="Horiuchi T."/>
        </authorList>
    </citation>
    <scope>NUCLEOTIDE SEQUENCE [LARGE SCALE GENOMIC DNA]</scope>
    <source>
        <strain>K12 / W3110 / ATCC 27325 / DSM 5911</strain>
    </source>
</reference>
<reference key="2">
    <citation type="journal article" date="1997" name="Science">
        <title>The complete genome sequence of Escherichia coli K-12.</title>
        <authorList>
            <person name="Blattner F.R."/>
            <person name="Plunkett G. III"/>
            <person name="Bloch C.A."/>
            <person name="Perna N.T."/>
            <person name="Burland V."/>
            <person name="Riley M."/>
            <person name="Collado-Vides J."/>
            <person name="Glasner J.D."/>
            <person name="Rode C.K."/>
            <person name="Mayhew G.F."/>
            <person name="Gregor J."/>
            <person name="Davis N.W."/>
            <person name="Kirkpatrick H.A."/>
            <person name="Goeden M.A."/>
            <person name="Rose D.J."/>
            <person name="Mau B."/>
            <person name="Shao Y."/>
        </authorList>
    </citation>
    <scope>NUCLEOTIDE SEQUENCE [LARGE SCALE GENOMIC DNA]</scope>
    <source>
        <strain>K12 / MG1655 / ATCC 47076</strain>
    </source>
</reference>
<reference key="3">
    <citation type="journal article" date="2006" name="Mol. Syst. Biol.">
        <title>Highly accurate genome sequences of Escherichia coli K-12 strains MG1655 and W3110.</title>
        <authorList>
            <person name="Hayashi K."/>
            <person name="Morooka N."/>
            <person name="Yamamoto Y."/>
            <person name="Fujita K."/>
            <person name="Isono K."/>
            <person name="Choi S."/>
            <person name="Ohtsubo E."/>
            <person name="Baba T."/>
            <person name="Wanner B.L."/>
            <person name="Mori H."/>
            <person name="Horiuchi T."/>
        </authorList>
    </citation>
    <scope>NUCLEOTIDE SEQUENCE [LARGE SCALE GENOMIC DNA]</scope>
    <source>
        <strain>K12 / W3110 / ATCC 27325 / DSM 5911</strain>
    </source>
</reference>
<reference key="4">
    <citation type="submission" date="2004-04" db="EMBL/GenBank/DDBJ databases">
        <title>Escherichia coli K-12 MG1655 genomic sequence correction.</title>
        <authorList>
            <person name="Perna N.T."/>
        </authorList>
    </citation>
    <scope>NUCLEOTIDE SEQUENCE [GENOMIC DNA] OF 529-553</scope>
    <source>
        <strain>K12 / MG1655 / ATCC 47076</strain>
    </source>
</reference>
<reference key="5">
    <citation type="journal article" date="2005" name="Science">
        <title>Global topology analysis of the Escherichia coli inner membrane proteome.</title>
        <authorList>
            <person name="Daley D.O."/>
            <person name="Rapp M."/>
            <person name="Granseth E."/>
            <person name="Melen K."/>
            <person name="Drew D."/>
            <person name="von Heijne G."/>
        </authorList>
    </citation>
    <scope>SUBCELLULAR LOCATION</scope>
    <scope>TOPOLOGY [LARGE SCALE ANALYSIS]</scope>
    <source>
        <strain>K12 / MG1655 / ATCC 47076</strain>
    </source>
</reference>
<reference key="6">
    <citation type="journal article" date="2010" name="Genes Dev.">
        <title>Functional microdomains in bacterial membranes.</title>
        <authorList>
            <person name="Lopez D."/>
            <person name="Kolter R."/>
        </authorList>
    </citation>
    <scope>FUNCTION</scope>
    <scope>SUBCELLULAR LOCATION</scope>
    <source>
        <strain>DL95</strain>
    </source>
</reference>
<reference key="7">
    <citation type="journal article" date="2019" name="Arch. Microbiol.">
        <title>Flotillin homologue is involved in the swimming behavior of Escherichia coli.</title>
        <authorList>
            <person name="Padilla-Vaca F."/>
            <person name="Vargas-Maya N.I."/>
            <person name="Elizarraras-Vargas N.U."/>
            <person name="Rangel-Serrano A."/>
            <person name="Cardoso-Reyes L.R."/>
            <person name="Razo-Soria T."/>
            <person name="Membrillo-Hernandez J."/>
            <person name="Franco B."/>
        </authorList>
    </citation>
    <scope>DISRUPTION PHENOTYPE</scope>
    <source>
        <strain>K12 / BW25113</strain>
    </source>
</reference>